<keyword id="KW-0255">Endonuclease</keyword>
<keyword id="KW-0378">Hydrolase</keyword>
<keyword id="KW-0456">Lyase</keyword>
<keyword id="KW-0464">Manganese</keyword>
<keyword id="KW-0472">Membrane</keyword>
<keyword id="KW-0479">Metal-binding</keyword>
<keyword id="KW-0540">Nuclease</keyword>
<keyword id="KW-1185">Reference proteome</keyword>
<keyword id="KW-0694">RNA-binding</keyword>
<keyword id="KW-0812">Transmembrane</keyword>
<keyword id="KW-1133">Transmembrane helix</keyword>
<organism evidence="12">
    <name type="scientific">Drosophila melanogaster</name>
    <name type="common">Fruit fly</name>
    <dbReference type="NCBI Taxonomy" id="7227"/>
    <lineage>
        <taxon>Eukaryota</taxon>
        <taxon>Metazoa</taxon>
        <taxon>Ecdysozoa</taxon>
        <taxon>Arthropoda</taxon>
        <taxon>Hexapoda</taxon>
        <taxon>Insecta</taxon>
        <taxon>Pterygota</taxon>
        <taxon>Neoptera</taxon>
        <taxon>Endopterygota</taxon>
        <taxon>Diptera</taxon>
        <taxon>Brachycera</taxon>
        <taxon>Muscomorpha</taxon>
        <taxon>Ephydroidea</taxon>
        <taxon>Drosophilidae</taxon>
        <taxon>Drosophila</taxon>
        <taxon>Sophophora</taxon>
    </lineage>
</organism>
<feature type="chain" id="PRO_0000461208" description="Uridylate-specific endoribonuclease EndoU">
    <location>
        <begin position="1"/>
        <end position="322"/>
    </location>
</feature>
<feature type="transmembrane region" description="Helical" evidence="1">
    <location>
        <begin position="25"/>
        <end position="45"/>
    </location>
</feature>
<feature type="domain" description="EndoU" evidence="2">
    <location>
        <begin position="53"/>
        <end position="322"/>
    </location>
</feature>
<feature type="active site" evidence="2">
    <location>
        <position position="200"/>
    </location>
</feature>
<feature type="active site" evidence="2">
    <location>
        <position position="215"/>
    </location>
</feature>
<feature type="active site" evidence="2">
    <location>
        <position position="259"/>
    </location>
</feature>
<reference evidence="12" key="1">
    <citation type="journal article" date="2000" name="Science">
        <title>The genome sequence of Drosophila melanogaster.</title>
        <authorList>
            <person name="Adams M.D."/>
            <person name="Celniker S.E."/>
            <person name="Holt R.A."/>
            <person name="Evans C.A."/>
            <person name="Gocayne J.D."/>
            <person name="Amanatides P.G."/>
            <person name="Scherer S.E."/>
            <person name="Li P.W."/>
            <person name="Hoskins R.A."/>
            <person name="Galle R.F."/>
            <person name="George R.A."/>
            <person name="Lewis S.E."/>
            <person name="Richards S."/>
            <person name="Ashburner M."/>
            <person name="Henderson S.N."/>
            <person name="Sutton G.G."/>
            <person name="Wortman J.R."/>
            <person name="Yandell M.D."/>
            <person name="Zhang Q."/>
            <person name="Chen L.X."/>
            <person name="Brandon R.C."/>
            <person name="Rogers Y.-H.C."/>
            <person name="Blazej R.G."/>
            <person name="Champe M."/>
            <person name="Pfeiffer B.D."/>
            <person name="Wan K.H."/>
            <person name="Doyle C."/>
            <person name="Baxter E.G."/>
            <person name="Helt G."/>
            <person name="Nelson C.R."/>
            <person name="Miklos G.L.G."/>
            <person name="Abril J.F."/>
            <person name="Agbayani A."/>
            <person name="An H.-J."/>
            <person name="Andrews-Pfannkoch C."/>
            <person name="Baldwin D."/>
            <person name="Ballew R.M."/>
            <person name="Basu A."/>
            <person name="Baxendale J."/>
            <person name="Bayraktaroglu L."/>
            <person name="Beasley E.M."/>
            <person name="Beeson K.Y."/>
            <person name="Benos P.V."/>
            <person name="Berman B.P."/>
            <person name="Bhandari D."/>
            <person name="Bolshakov S."/>
            <person name="Borkova D."/>
            <person name="Botchan M.R."/>
            <person name="Bouck J."/>
            <person name="Brokstein P."/>
            <person name="Brottier P."/>
            <person name="Burtis K.C."/>
            <person name="Busam D.A."/>
            <person name="Butler H."/>
            <person name="Cadieu E."/>
            <person name="Center A."/>
            <person name="Chandra I."/>
            <person name="Cherry J.M."/>
            <person name="Cawley S."/>
            <person name="Dahlke C."/>
            <person name="Davenport L.B."/>
            <person name="Davies P."/>
            <person name="de Pablos B."/>
            <person name="Delcher A."/>
            <person name="Deng Z."/>
            <person name="Mays A.D."/>
            <person name="Dew I."/>
            <person name="Dietz S.M."/>
            <person name="Dodson K."/>
            <person name="Doup L.E."/>
            <person name="Downes M."/>
            <person name="Dugan-Rocha S."/>
            <person name="Dunkov B.C."/>
            <person name="Dunn P."/>
            <person name="Durbin K.J."/>
            <person name="Evangelista C.C."/>
            <person name="Ferraz C."/>
            <person name="Ferriera S."/>
            <person name="Fleischmann W."/>
            <person name="Fosler C."/>
            <person name="Gabrielian A.E."/>
            <person name="Garg N.S."/>
            <person name="Gelbart W.M."/>
            <person name="Glasser K."/>
            <person name="Glodek A."/>
            <person name="Gong F."/>
            <person name="Gorrell J.H."/>
            <person name="Gu Z."/>
            <person name="Guan P."/>
            <person name="Harris M."/>
            <person name="Harris N.L."/>
            <person name="Harvey D.A."/>
            <person name="Heiman T.J."/>
            <person name="Hernandez J.R."/>
            <person name="Houck J."/>
            <person name="Hostin D."/>
            <person name="Houston K.A."/>
            <person name="Howland T.J."/>
            <person name="Wei M.-H."/>
            <person name="Ibegwam C."/>
            <person name="Jalali M."/>
            <person name="Kalush F."/>
            <person name="Karpen G.H."/>
            <person name="Ke Z."/>
            <person name="Kennison J.A."/>
            <person name="Ketchum K.A."/>
            <person name="Kimmel B.E."/>
            <person name="Kodira C.D."/>
            <person name="Kraft C.L."/>
            <person name="Kravitz S."/>
            <person name="Kulp D."/>
            <person name="Lai Z."/>
            <person name="Lasko P."/>
            <person name="Lei Y."/>
            <person name="Levitsky A.A."/>
            <person name="Li J.H."/>
            <person name="Li Z."/>
            <person name="Liang Y."/>
            <person name="Lin X."/>
            <person name="Liu X."/>
            <person name="Mattei B."/>
            <person name="McIntosh T.C."/>
            <person name="McLeod M.P."/>
            <person name="McPherson D."/>
            <person name="Merkulov G."/>
            <person name="Milshina N.V."/>
            <person name="Mobarry C."/>
            <person name="Morris J."/>
            <person name="Moshrefi A."/>
            <person name="Mount S.M."/>
            <person name="Moy M."/>
            <person name="Murphy B."/>
            <person name="Murphy L."/>
            <person name="Muzny D.M."/>
            <person name="Nelson D.L."/>
            <person name="Nelson D.R."/>
            <person name="Nelson K.A."/>
            <person name="Nixon K."/>
            <person name="Nusskern D.R."/>
            <person name="Pacleb J.M."/>
            <person name="Palazzolo M."/>
            <person name="Pittman G.S."/>
            <person name="Pan S."/>
            <person name="Pollard J."/>
            <person name="Puri V."/>
            <person name="Reese M.G."/>
            <person name="Reinert K."/>
            <person name="Remington K."/>
            <person name="Saunders R.D.C."/>
            <person name="Scheeler F."/>
            <person name="Shen H."/>
            <person name="Shue B.C."/>
            <person name="Siden-Kiamos I."/>
            <person name="Simpson M."/>
            <person name="Skupski M.P."/>
            <person name="Smith T.J."/>
            <person name="Spier E."/>
            <person name="Spradling A.C."/>
            <person name="Stapleton M."/>
            <person name="Strong R."/>
            <person name="Sun E."/>
            <person name="Svirskas R."/>
            <person name="Tector C."/>
            <person name="Turner R."/>
            <person name="Venter E."/>
            <person name="Wang A.H."/>
            <person name="Wang X."/>
            <person name="Wang Z.-Y."/>
            <person name="Wassarman D.A."/>
            <person name="Weinstock G.M."/>
            <person name="Weissenbach J."/>
            <person name="Williams S.M."/>
            <person name="Woodage T."/>
            <person name="Worley K.C."/>
            <person name="Wu D."/>
            <person name="Yang S."/>
            <person name="Yao Q.A."/>
            <person name="Ye J."/>
            <person name="Yeh R.-F."/>
            <person name="Zaveri J.S."/>
            <person name="Zhan M."/>
            <person name="Zhang G."/>
            <person name="Zhao Q."/>
            <person name="Zheng L."/>
            <person name="Zheng X.H."/>
            <person name="Zhong F.N."/>
            <person name="Zhong W."/>
            <person name="Zhou X."/>
            <person name="Zhu S.C."/>
            <person name="Zhu X."/>
            <person name="Smith H.O."/>
            <person name="Gibbs R.A."/>
            <person name="Myers E.W."/>
            <person name="Rubin G.M."/>
            <person name="Venter J.C."/>
        </authorList>
    </citation>
    <scope>NUCLEOTIDE SEQUENCE [LARGE SCALE GENOMIC DNA]</scope>
    <source>
        <strain evidence="12">Berkeley</strain>
    </source>
</reference>
<reference evidence="12" key="2">
    <citation type="journal article" date="2002" name="Genome Biol.">
        <title>Annotation of the Drosophila melanogaster euchromatic genome: a systematic review.</title>
        <authorList>
            <person name="Misra S."/>
            <person name="Crosby M.A."/>
            <person name="Mungall C.J."/>
            <person name="Matthews B.B."/>
            <person name="Campbell K.S."/>
            <person name="Hradecky P."/>
            <person name="Huang Y."/>
            <person name="Kaminker J.S."/>
            <person name="Millburn G.H."/>
            <person name="Prochnik S.E."/>
            <person name="Smith C.D."/>
            <person name="Tupy J.L."/>
            <person name="Whitfield E.J."/>
            <person name="Bayraktaroglu L."/>
            <person name="Berman B.P."/>
            <person name="Bettencourt B.R."/>
            <person name="Celniker S.E."/>
            <person name="de Grey A.D.N.J."/>
            <person name="Drysdale R.A."/>
            <person name="Harris N.L."/>
            <person name="Richter J."/>
            <person name="Russo S."/>
            <person name="Schroeder A.J."/>
            <person name="Shu S.Q."/>
            <person name="Stapleton M."/>
            <person name="Yamada C."/>
            <person name="Ashburner M."/>
            <person name="Gelbart W.M."/>
            <person name="Rubin G.M."/>
            <person name="Lewis S.E."/>
        </authorList>
    </citation>
    <scope>GENOME REANNOTATION</scope>
    <source>
        <strain evidence="12">Berkeley</strain>
    </source>
</reference>
<reference evidence="9 10" key="3">
    <citation type="journal article" date="2002" name="Genome Biol.">
        <title>A Drosophila full-length cDNA resource.</title>
        <authorList>
            <person name="Stapleton M."/>
            <person name="Carlson J.W."/>
            <person name="Brokstein P."/>
            <person name="Yu C."/>
            <person name="Champe M."/>
            <person name="George R.A."/>
            <person name="Guarin H."/>
            <person name="Kronmiller B."/>
            <person name="Pacleb J.M."/>
            <person name="Park S."/>
            <person name="Wan K.H."/>
            <person name="Rubin G.M."/>
            <person name="Celniker S.E."/>
        </authorList>
    </citation>
    <scope>NUCLEOTIDE SEQUENCE [LARGE SCALE MRNA]</scope>
    <source>
        <strain evidence="9 10">Berkeley</strain>
        <tissue evidence="9 10">Embryo</tissue>
    </source>
</reference>
<reference evidence="10" key="4">
    <citation type="submission" date="2009-03" db="EMBL/GenBank/DDBJ databases">
        <authorList>
            <person name="Carlson J."/>
            <person name="Booth B."/>
            <person name="Frise E."/>
            <person name="Park S."/>
            <person name="Wan K."/>
            <person name="Yu C."/>
            <person name="Celniker S."/>
        </authorList>
    </citation>
    <scope>NUCLEOTIDE SEQUENCE [LARGE SCALE MRNA]</scope>
    <source>
        <strain evidence="10">Berkeley</strain>
        <tissue evidence="10">Embryo</tissue>
    </source>
</reference>
<reference evidence="8" key="5">
    <citation type="journal article" date="2017" name="Sci. Rep.">
        <title>Drosophila CG3303 is an essential endoribonuclease linked to TDP-43-mediated neurodegeneration.</title>
        <authorList>
            <person name="Laneve P."/>
            <person name="Piacentini L."/>
            <person name="Casale A.M."/>
            <person name="Capauto D."/>
            <person name="Gioia U."/>
            <person name="Cappucci U."/>
            <person name="Di Carlo V."/>
            <person name="Bozzoni I."/>
            <person name="Di Micco P."/>
            <person name="Morea V."/>
            <person name="Di Franco C.A."/>
            <person name="Caffarelli E."/>
        </authorList>
    </citation>
    <scope>FUNCTION</scope>
    <scope>CATALYTIC ACTIVITY</scope>
    <scope>COFACTOR MN(2+)</scope>
    <scope>TISSUE SPECIFICITY</scope>
    <scope>DEVELOPMENTAL STAGE</scope>
    <scope>DISRUPTION PHENOTYPE</scope>
</reference>
<reference evidence="8" key="6">
    <citation type="journal article" date="2023" name="Nat. Commun.">
        <title>The endoribonuclease Arlr is required to maintain lipid homeostasis by downregulating lipolytic genes during aging.</title>
        <authorList>
            <person name="Sun X."/>
            <person name="Shen J."/>
            <person name="Perrimon N."/>
            <person name="Kong X."/>
            <person name="Wang D."/>
        </authorList>
    </citation>
    <scope>FUNCTION</scope>
    <scope>DISRUPTION PHENOTYPE</scope>
</reference>
<comment type="function">
    <text evidence="4 5">Endoribonuclease that cleaves single-stranded RNAs at uridylates and releases products that have 2'-3'-cyclic phosphate termini (PubMed:28139767). Preferentially cleaves single stranded RNA at poly-U sites with CU, UC and AU sites cleaved less efficiently (PubMed:28139767). May target mRNAs encoding proteins involved in lipid metabolism to regulate their expression (PubMed:37803019). Regulates levels of TBPH protein, but not mRNA, by an as yet unknown mechanism (PubMed:28139767). Important for neuronal development or function (PubMed:28139767).</text>
</comment>
<comment type="catalytic activity">
    <reaction evidence="4">
        <text>a ribonucleotidyl-ribonucleotide-RNA = a 3'-end 2',3'-cyclophospho-ribonucleotide-RNA + a 5'-end dephospho-ribonucleoside-RNA</text>
        <dbReference type="Rhea" id="RHEA:67796"/>
        <dbReference type="Rhea" id="RHEA-COMP:10464"/>
        <dbReference type="Rhea" id="RHEA-COMP:13936"/>
        <dbReference type="Rhea" id="RHEA-COMP:17355"/>
        <dbReference type="ChEBI" id="CHEBI:83064"/>
        <dbReference type="ChEBI" id="CHEBI:138284"/>
        <dbReference type="ChEBI" id="CHEBI:173118"/>
    </reaction>
    <physiologicalReaction direction="left-to-right" evidence="4">
        <dbReference type="Rhea" id="RHEA:67797"/>
    </physiologicalReaction>
</comment>
<comment type="cofactor">
    <cofactor evidence="4">
        <name>Mn(2+)</name>
        <dbReference type="ChEBI" id="CHEBI:29035"/>
    </cofactor>
</comment>
<comment type="subunit">
    <text evidence="2 3">Monomer.</text>
</comment>
<comment type="subcellular location">
    <subcellularLocation>
        <location evidence="1">Membrane</location>
        <topology evidence="1">Single-pass membrane protein</topology>
    </subcellularLocation>
</comment>
<comment type="tissue specificity">
    <text evidence="4">Predominantly expressed in head.</text>
</comment>
<comment type="developmental stage">
    <text evidence="4">Expressed at all stages of development with significantly higher levels of expression in adults.</text>
</comment>
<comment type="disruption phenotype">
    <text evidence="4 5">RNAi-mediated knockdown is late pupal lethal (PubMed:28139767). Conditional RNAi-mediated knockdown in pan-neuronal tissues or specifically in cholinergic neurons results in significant lifespan reduction with some individuals failing to eclose (PubMed:28139767). Individuals that do survive to adulthood appear immature bearing unexpanded wings, soft cuticle, unretracted ptilinum, dimpled dorsal thorax, and misoriented scutellar bristles (PubMed:28139767). Surviving adults also showed sever locomotor defects (PubMed:28139767). Conditional RNAi-mediated knockdown in motor neurons results in some locomotor defects but only mild developmental or lifespan effects (PubMed:28139767). Conditional RNAi-mediated knockdown in fat body tissue results in adults that have reduced triacylglycerol levels and smaller lipid droplets in fat body cells (PubMed:37803019). Conditional RNAi-mediated knockdown in the developing eye has no detrimental effect on eye development (PubMed:28139767).</text>
</comment>
<comment type="similarity">
    <text evidence="2 3">Belongs to the ENDOU family.</text>
</comment>
<sequence>MDAVQQQTNSTSNIDSAKCQKLKRFVIVGLLITIGILSWHFYEYFHSKPLPKTPDDVLTLSKNLYAEETEVSPYLYKVNLQGKTTSGAHDDRAPRNLFELHQDLLARDANSTTALLMRLFDNYELDVAVQEHPTPEHVQEQYDFLRAVMGTRVMKLTMRFLVHKDIVSVEYDDQLRLLQELWFTPYSRGRGIVGSSSFEHVFMAEIRDQKVLGLHNWLYFADQEQRGNVDYKGWLNHKEMGKHNQMVLSVRYTFHNINKPVNGFFVGISPELDMALYTACFLATAKEEPCHIQLGHASATIVSHEWKWNGMRLIGTVYPDSS</sequence>
<dbReference type="EC" id="3.1.-.-" evidence="2"/>
<dbReference type="EC" id="4.6.1.-" evidence="4"/>
<dbReference type="EMBL" id="AE014297">
    <property type="protein sequence ID" value="AAF55248.2"/>
    <property type="molecule type" value="Genomic_DNA"/>
</dbReference>
<dbReference type="EMBL" id="AY051910">
    <property type="protein sequence ID" value="AAK93334.1"/>
    <property type="molecule type" value="mRNA"/>
</dbReference>
<dbReference type="EMBL" id="BT001644">
    <property type="protein sequence ID" value="AAN71399.1"/>
    <property type="molecule type" value="mRNA"/>
</dbReference>
<dbReference type="RefSeq" id="NP_650508.1">
    <property type="nucleotide sequence ID" value="NM_142251.4"/>
</dbReference>
<dbReference type="SMR" id="Q9VF14"/>
<dbReference type="IntAct" id="Q9VF14">
    <property type="interactions" value="4"/>
</dbReference>
<dbReference type="STRING" id="7227.FBpp0082654"/>
<dbReference type="SwissPalm" id="Q9VF14"/>
<dbReference type="PaxDb" id="7227-FBpp0082654"/>
<dbReference type="DNASU" id="41931"/>
<dbReference type="EnsemblMetazoa" id="FBtr0083200">
    <property type="protein sequence ID" value="FBpp0082654"/>
    <property type="gene ID" value="FBgn0038381"/>
</dbReference>
<dbReference type="GeneID" id="41931"/>
<dbReference type="KEGG" id="dme:Dmel_CG3303"/>
<dbReference type="UCSC" id="CG3303-RA">
    <property type="organism name" value="d. melanogaster"/>
</dbReference>
<dbReference type="AGR" id="FB:FBgn0038381"/>
<dbReference type="CTD" id="8909"/>
<dbReference type="FlyBase" id="FBgn0038381">
    <property type="gene designation" value="EndoU"/>
</dbReference>
<dbReference type="VEuPathDB" id="VectorBase:FBgn0038381"/>
<dbReference type="eggNOG" id="KOG2849">
    <property type="taxonomic scope" value="Eukaryota"/>
</dbReference>
<dbReference type="GeneTree" id="ENSGT00530000063825"/>
<dbReference type="HOGENOM" id="CLU_048034_2_0_1"/>
<dbReference type="InParanoid" id="Q9VF14"/>
<dbReference type="OMA" id="NWLYFAD"/>
<dbReference type="OrthoDB" id="430326at2759"/>
<dbReference type="BioGRID-ORCS" id="41931">
    <property type="hits" value="0 hits in 1 CRISPR screen"/>
</dbReference>
<dbReference type="Proteomes" id="UP000000803">
    <property type="component" value="Chromosome 3R"/>
</dbReference>
<dbReference type="Bgee" id="FBgn0038381">
    <property type="expression patterns" value="Expressed in eye disc (Drosophila) and 55 other cell types or tissues"/>
</dbReference>
<dbReference type="ExpressionAtlas" id="Q9VF14">
    <property type="expression patterns" value="baseline and differential"/>
</dbReference>
<dbReference type="GO" id="GO:0016020">
    <property type="term" value="C:membrane"/>
    <property type="evidence" value="ECO:0007669"/>
    <property type="project" value="UniProtKB-SubCell"/>
</dbReference>
<dbReference type="GO" id="GO:0016829">
    <property type="term" value="F:lyase activity"/>
    <property type="evidence" value="ECO:0007669"/>
    <property type="project" value="UniProtKB-KW"/>
</dbReference>
<dbReference type="GO" id="GO:0046872">
    <property type="term" value="F:metal ion binding"/>
    <property type="evidence" value="ECO:0007669"/>
    <property type="project" value="UniProtKB-KW"/>
</dbReference>
<dbReference type="GO" id="GO:0003723">
    <property type="term" value="F:RNA binding"/>
    <property type="evidence" value="ECO:0007669"/>
    <property type="project" value="UniProtKB-KW"/>
</dbReference>
<dbReference type="GO" id="GO:0004521">
    <property type="term" value="F:RNA endonuclease activity"/>
    <property type="evidence" value="ECO:0000314"/>
    <property type="project" value="FlyBase"/>
</dbReference>
<dbReference type="GO" id="GO:0008344">
    <property type="term" value="P:adult locomotory behavior"/>
    <property type="evidence" value="ECO:0000315"/>
    <property type="project" value="FlyBase"/>
</dbReference>
<dbReference type="GO" id="GO:0050995">
    <property type="term" value="P:negative regulation of lipid catabolic process"/>
    <property type="evidence" value="ECO:0000316"/>
    <property type="project" value="FlyBase"/>
</dbReference>
<dbReference type="GO" id="GO:0016441">
    <property type="term" value="P:post-transcriptional gene silencing"/>
    <property type="evidence" value="ECO:0000316"/>
    <property type="project" value="FlyBase"/>
</dbReference>
<dbReference type="GO" id="GO:0006417">
    <property type="term" value="P:regulation of translation"/>
    <property type="evidence" value="ECO:0000315"/>
    <property type="project" value="FlyBase"/>
</dbReference>
<dbReference type="CDD" id="cd21159">
    <property type="entry name" value="XendoU"/>
    <property type="match status" value="1"/>
</dbReference>
<dbReference type="InterPro" id="IPR039787">
    <property type="entry name" value="ENDOU"/>
</dbReference>
<dbReference type="InterPro" id="IPR037227">
    <property type="entry name" value="EndoU-like"/>
</dbReference>
<dbReference type="InterPro" id="IPR018998">
    <property type="entry name" value="EndoU_C"/>
</dbReference>
<dbReference type="PANTHER" id="PTHR12439:SF42">
    <property type="entry name" value="ENDORIBONUCLEASE-RELATED"/>
    <property type="match status" value="1"/>
</dbReference>
<dbReference type="PANTHER" id="PTHR12439">
    <property type="entry name" value="PLACENTAL PROTEIN 11-RELATED"/>
    <property type="match status" value="1"/>
</dbReference>
<dbReference type="Pfam" id="PF09412">
    <property type="entry name" value="XendoU"/>
    <property type="match status" value="1"/>
</dbReference>
<dbReference type="SUPFAM" id="SSF142877">
    <property type="entry name" value="EndoU-like"/>
    <property type="match status" value="1"/>
</dbReference>
<dbReference type="PROSITE" id="PS51959">
    <property type="entry name" value="ENDOU"/>
    <property type="match status" value="1"/>
</dbReference>
<evidence type="ECO:0000255" key="1"/>
<evidence type="ECO:0000255" key="2">
    <source>
        <dbReference type="PROSITE-ProRule" id="PRU01304"/>
    </source>
</evidence>
<evidence type="ECO:0000255" key="3">
    <source>
        <dbReference type="RuleBase" id="RU367085"/>
    </source>
</evidence>
<evidence type="ECO:0000269" key="4">
    <source>
    </source>
</evidence>
<evidence type="ECO:0000269" key="5">
    <source>
    </source>
</evidence>
<evidence type="ECO:0000303" key="6">
    <source>
    </source>
</evidence>
<evidence type="ECO:0000303" key="7">
    <source>
    </source>
</evidence>
<evidence type="ECO:0000305" key="8"/>
<evidence type="ECO:0000312" key="9">
    <source>
        <dbReference type="EMBL" id="AAK93334.1"/>
    </source>
</evidence>
<evidence type="ECO:0000312" key="10">
    <source>
        <dbReference type="EMBL" id="AAN71399.1"/>
    </source>
</evidence>
<evidence type="ECO:0000312" key="11">
    <source>
        <dbReference type="FlyBase" id="FBgn0038381"/>
    </source>
</evidence>
<evidence type="ECO:0000312" key="12">
    <source>
        <dbReference type="Proteomes" id="UP000000803"/>
    </source>
</evidence>
<name>ENDUB_DROME</name>
<gene>
    <name evidence="11" type="primary">EndoU</name>
    <name evidence="6 7 11" type="synonym">DendoU</name>
    <name evidence="11" type="ORF">CG3303</name>
</gene>
<accession>Q9VF14</accession>
<accession>Q960Q7</accession>
<protein>
    <recommendedName>
        <fullName evidence="8">Uridylate-specific endoribonuclease EndoU</fullName>
        <ecNumber evidence="2">3.1.-.-</ecNumber>
        <ecNumber evidence="4">4.6.1.-</ecNumber>
    </recommendedName>
    <alternativeName>
        <fullName evidence="6">Endoribonuclease U-specific</fullName>
    </alternativeName>
</protein>
<proteinExistence type="evidence at protein level"/>